<sequence>MTLVLDHDRAGGYWGATYVFTAVKGLQVIIDGPVGCENLPVTSVLHYTDALPPHELPIVVTGLGEEELGKTGTEAAMKRAWQTLDPELPAVVVTGSISEMIGGGVTPEGTNIKRFLPRTIDEDQWQSADRALTWLWTEFGPKKMPQPRPRKEGEKPVVNIIGPSYGMFNMPSDLAEIRRLVEGIGAEVGVVFPLGCHLADIRKLGTADANVCMYREFGRNLCETLERPYFQAPVGLSSTTKFLRALAAELGLDPEPFIEREKHTTIKPLWDLWRSVTQDFFATANFGIVANDTYARGIRHFLEDDMGLPCAFAYSREAGVKPRNDEVREDIHKSPPLVMFGSYNERMYMAEVGARGKFIPASFPGAAIRRHIGTPFMGYSGATYLVQEVCNALFDALFHILPLGTDMDKGQATLARGADVPVKAGSNGAPTHEVTWDTEAKARLDELVEEQPVLIRISAAKRLRDAAEAAARAKGADTVTKDCLQEALLEGEAV</sequence>
<proteinExistence type="inferred from homology"/>
<gene>
    <name type="primary">bchZ</name>
</gene>
<comment type="function">
    <text evidence="1">Converts chlorophylls (Chl) into bacteriochlorophylls (BChl) by reducing ring B of the tetrapyrrole.</text>
</comment>
<comment type="catalytic activity">
    <reaction evidence="1">
        <text>3-deacetyl-3-vinylbacteriochlorophyllide a + 2 oxidized [2Fe-2S]-[ferredoxin] + ADP + phosphate = chlorophyllide a + 2 reduced [2Fe-2S]-[ferredoxin] + ATP + H2O + H(+)</text>
        <dbReference type="Rhea" id="RHEA:37051"/>
        <dbReference type="Rhea" id="RHEA-COMP:10000"/>
        <dbReference type="Rhea" id="RHEA-COMP:10001"/>
        <dbReference type="ChEBI" id="CHEBI:15377"/>
        <dbReference type="ChEBI" id="CHEBI:15378"/>
        <dbReference type="ChEBI" id="CHEBI:30616"/>
        <dbReference type="ChEBI" id="CHEBI:33737"/>
        <dbReference type="ChEBI" id="CHEBI:33738"/>
        <dbReference type="ChEBI" id="CHEBI:43474"/>
        <dbReference type="ChEBI" id="CHEBI:83348"/>
        <dbReference type="ChEBI" id="CHEBI:83373"/>
        <dbReference type="ChEBI" id="CHEBI:456216"/>
        <dbReference type="EC" id="1.3.7.15"/>
    </reaction>
</comment>
<comment type="catalytic activity">
    <reaction evidence="1">
        <text>bacteriochlorophyllide a + 2 oxidized [2Fe-2S]-[ferredoxin] + ADP + phosphate = 3-acetyl-3-devinylchlorophyllide a + 2 reduced [2Fe-2S]-[ferredoxin] + ATP + H2O + H(+)</text>
        <dbReference type="Rhea" id="RHEA:48944"/>
        <dbReference type="Rhea" id="RHEA-COMP:10000"/>
        <dbReference type="Rhea" id="RHEA-COMP:10001"/>
        <dbReference type="ChEBI" id="CHEBI:15377"/>
        <dbReference type="ChEBI" id="CHEBI:15378"/>
        <dbReference type="ChEBI" id="CHEBI:30616"/>
        <dbReference type="ChEBI" id="CHEBI:33737"/>
        <dbReference type="ChEBI" id="CHEBI:33738"/>
        <dbReference type="ChEBI" id="CHEBI:43474"/>
        <dbReference type="ChEBI" id="CHEBI:90794"/>
        <dbReference type="ChEBI" id="CHEBI:90795"/>
        <dbReference type="ChEBI" id="CHEBI:456216"/>
        <dbReference type="EC" id="1.3.7.15"/>
    </reaction>
</comment>
<comment type="catalytic activity">
    <reaction evidence="1">
        <text>3-deacetyl-3-(1-hydroxyethyl)bacteriochlorophyllide a + 2 oxidized [2Fe-2S]-[ferredoxin] + ADP + phosphate = 3-devinyl-3-(1-hydroxyethyl)chlorophyllide a + 2 reduced [2Fe-2S]-[ferredoxin] + ATP + H2O + H(+)</text>
        <dbReference type="Rhea" id="RHEA:48948"/>
        <dbReference type="Rhea" id="RHEA-COMP:10000"/>
        <dbReference type="Rhea" id="RHEA-COMP:10001"/>
        <dbReference type="ChEBI" id="CHEBI:15377"/>
        <dbReference type="ChEBI" id="CHEBI:15378"/>
        <dbReference type="ChEBI" id="CHEBI:30616"/>
        <dbReference type="ChEBI" id="CHEBI:33737"/>
        <dbReference type="ChEBI" id="CHEBI:33738"/>
        <dbReference type="ChEBI" id="CHEBI:43474"/>
        <dbReference type="ChEBI" id="CHEBI:90791"/>
        <dbReference type="ChEBI" id="CHEBI:90792"/>
        <dbReference type="ChEBI" id="CHEBI:456216"/>
        <dbReference type="EC" id="1.3.7.15"/>
    </reaction>
</comment>
<comment type="pathway">
    <text>Porphyrin-containing compound metabolism; bacteriochlorophyll biosynthesis.</text>
</comment>
<comment type="subunit">
    <text evidence="1">Chlorophyllide reductase is composed of three subunits; BchX, BchY and BchZ. Forms a heterodimer of one BchY and one BchZ subunit.</text>
</comment>
<comment type="similarity">
    <text evidence="2">Belongs to the ChlB/BchB/BchZ family.</text>
</comment>
<feature type="chain" id="PRO_0000219848" description="Chlorophyllide reductase subunit Z">
    <location>
        <begin position="1"/>
        <end position="494"/>
    </location>
</feature>
<keyword id="KW-0077">Bacteriochlorophyll biosynthesis</keyword>
<keyword id="KW-0149">Chlorophyll biosynthesis</keyword>
<keyword id="KW-0560">Oxidoreductase</keyword>
<keyword id="KW-0602">Photosynthesis</keyword>
<name>BCHZ_ERYLO</name>
<dbReference type="EC" id="1.3.7.15" evidence="1"/>
<dbReference type="EMBL" id="AB035570">
    <property type="protein sequence ID" value="BAA96512.1"/>
    <property type="molecule type" value="Genomic_DNA"/>
</dbReference>
<dbReference type="SMR" id="Q9KWI8"/>
<dbReference type="STRING" id="1044.EH31_08740"/>
<dbReference type="eggNOG" id="COG2710">
    <property type="taxonomic scope" value="Bacteria"/>
</dbReference>
<dbReference type="UniPathway" id="UPA00669"/>
<dbReference type="GO" id="GO:0016730">
    <property type="term" value="F:oxidoreductase activity, acting on iron-sulfur proteins as donors"/>
    <property type="evidence" value="ECO:0007669"/>
    <property type="project" value="InterPro"/>
</dbReference>
<dbReference type="GO" id="GO:0030494">
    <property type="term" value="P:bacteriochlorophyll biosynthetic process"/>
    <property type="evidence" value="ECO:0007669"/>
    <property type="project" value="UniProtKB-UniPathway"/>
</dbReference>
<dbReference type="GO" id="GO:0015979">
    <property type="term" value="P:photosynthesis"/>
    <property type="evidence" value="ECO:0007669"/>
    <property type="project" value="UniProtKB-KW"/>
</dbReference>
<dbReference type="Gene3D" id="3.40.50.1980">
    <property type="entry name" value="Nitrogenase molybdenum iron protein domain"/>
    <property type="match status" value="2"/>
</dbReference>
<dbReference type="InterPro" id="IPR010244">
    <property type="entry name" value="BchZ"/>
</dbReference>
<dbReference type="InterPro" id="IPR050152">
    <property type="entry name" value="ChlB/BchB/BchZ"/>
</dbReference>
<dbReference type="InterPro" id="IPR013580">
    <property type="entry name" value="LI-POR_suB-like_C"/>
</dbReference>
<dbReference type="InterPro" id="IPR000510">
    <property type="entry name" value="Nase/OxRdtase_comp1"/>
</dbReference>
<dbReference type="InterPro" id="IPR016209">
    <property type="entry name" value="Protochlorophyllide_Rdtase"/>
</dbReference>
<dbReference type="NCBIfam" id="TIGR02014">
    <property type="entry name" value="BchZ"/>
    <property type="match status" value="1"/>
</dbReference>
<dbReference type="PANTHER" id="PTHR33712">
    <property type="entry name" value="LIGHT-INDEPENDENT PROTOCHLOROPHYLLIDE REDUCTASE SUBUNIT B"/>
    <property type="match status" value="1"/>
</dbReference>
<dbReference type="PANTHER" id="PTHR33712:SF7">
    <property type="entry name" value="LIGHT-INDEPENDENT PROTOCHLOROPHYLLIDE REDUCTASE SUBUNIT B"/>
    <property type="match status" value="1"/>
</dbReference>
<dbReference type="Pfam" id="PF00148">
    <property type="entry name" value="Oxidored_nitro"/>
    <property type="match status" value="1"/>
</dbReference>
<dbReference type="Pfam" id="PF08369">
    <property type="entry name" value="PCP_red"/>
    <property type="match status" value="1"/>
</dbReference>
<dbReference type="PIRSF" id="PIRSF000163">
    <property type="entry name" value="PCP_ChlB"/>
    <property type="match status" value="1"/>
</dbReference>
<dbReference type="SUPFAM" id="SSF53807">
    <property type="entry name" value="Helical backbone' metal receptor"/>
    <property type="match status" value="1"/>
</dbReference>
<protein>
    <recommendedName>
        <fullName>Chlorophyllide reductase subunit Z</fullName>
        <ecNumber evidence="1">1.3.7.15</ecNumber>
    </recommendedName>
    <alternativeName>
        <fullName>Chlorin reductase subunit Z</fullName>
    </alternativeName>
</protein>
<reference key="1">
    <citation type="submission" date="1999-12" db="EMBL/GenBank/DDBJ databases">
        <title>Nucleotide sequences of genes coding for photosynthetic reaction centers and light-harvesting proteins and BChl biosynthesis enzyme of Erythrobacter longus.</title>
        <authorList>
            <person name="Hamada T."/>
        </authorList>
    </citation>
    <scope>NUCLEOTIDE SEQUENCE [GENOMIC DNA]</scope>
    <source>
        <strain>MBIC2294</strain>
    </source>
</reference>
<organism>
    <name type="scientific">Erythrobacter longus</name>
    <dbReference type="NCBI Taxonomy" id="1044"/>
    <lineage>
        <taxon>Bacteria</taxon>
        <taxon>Pseudomonadati</taxon>
        <taxon>Pseudomonadota</taxon>
        <taxon>Alphaproteobacteria</taxon>
        <taxon>Sphingomonadales</taxon>
        <taxon>Erythrobacteraceae</taxon>
        <taxon>Erythrobacter/Porphyrobacter group</taxon>
        <taxon>Erythrobacter</taxon>
    </lineage>
</organism>
<evidence type="ECO:0000250" key="1">
    <source>
        <dbReference type="UniProtKB" id="P26179"/>
    </source>
</evidence>
<evidence type="ECO:0000305" key="2"/>
<accession>Q9KWI8</accession>